<organism evidence="10">
    <name type="scientific">Caenorhabditis elegans</name>
    <dbReference type="NCBI Taxonomy" id="6239"/>
    <lineage>
        <taxon>Eukaryota</taxon>
        <taxon>Metazoa</taxon>
        <taxon>Ecdysozoa</taxon>
        <taxon>Nematoda</taxon>
        <taxon>Chromadorea</taxon>
        <taxon>Rhabditida</taxon>
        <taxon>Rhabditina</taxon>
        <taxon>Rhabditomorpha</taxon>
        <taxon>Rhabditoidea</taxon>
        <taxon>Rhabditidae</taxon>
        <taxon>Peloderinae</taxon>
        <taxon>Caenorhabditis</taxon>
    </lineage>
</organism>
<protein>
    <recommendedName>
        <fullName evidence="7">Putative inactive caspase B</fullName>
    </recommendedName>
    <component>
        <recommendedName>
            <fullName evidence="8">Putative inactive caspase B subunit p31</fullName>
        </recommendedName>
    </component>
    <component>
        <recommendedName>
            <fullName evidence="8">Putative inactive caspase B subunit p17</fullName>
        </recommendedName>
    </component>
    <component>
        <recommendedName>
            <fullName evidence="8">Putative inactive caspase subunit p14</fullName>
        </recommendedName>
    </component>
</protein>
<evidence type="ECO:0000255" key="1"/>
<evidence type="ECO:0000255" key="2">
    <source>
        <dbReference type="RuleBase" id="RU003971"/>
    </source>
</evidence>
<evidence type="ECO:0000269" key="3">
    <source>
    </source>
</evidence>
<evidence type="ECO:0000269" key="4">
    <source>
    </source>
</evidence>
<evidence type="ECO:0000269" key="5">
    <source>
    </source>
</evidence>
<evidence type="ECO:0000303" key="6">
    <source>
    </source>
</evidence>
<evidence type="ECO:0000305" key="7"/>
<evidence type="ECO:0000305" key="8">
    <source>
    </source>
</evidence>
<evidence type="ECO:0000312" key="9">
    <source>
        <dbReference type="EMBL" id="AAC98296.1"/>
    </source>
</evidence>
<evidence type="ECO:0000312" key="10">
    <source>
        <dbReference type="Proteomes" id="UP000001940"/>
    </source>
</evidence>
<evidence type="ECO:0000312" key="11">
    <source>
        <dbReference type="WormBase" id="Y73B6BL.7a"/>
    </source>
</evidence>
<evidence type="ECO:0000312" key="12">
    <source>
        <dbReference type="WormBase" id="Y73B6BL.7b"/>
    </source>
</evidence>
<evidence type="ECO:0000312" key="13">
    <source>
        <dbReference type="WormBase" id="Y73B6BL.7c"/>
    </source>
</evidence>
<dbReference type="EMBL" id="AF088288">
    <property type="protein sequence ID" value="AAC98295.1"/>
    <property type="molecule type" value="mRNA"/>
</dbReference>
<dbReference type="EMBL" id="AF088289">
    <property type="protein sequence ID" value="AAC98296.1"/>
    <property type="molecule type" value="mRNA"/>
</dbReference>
<dbReference type="EMBL" id="BX284604">
    <property type="protein sequence ID" value="CCD74157.1"/>
    <property type="molecule type" value="Genomic_DNA"/>
</dbReference>
<dbReference type="EMBL" id="BX284604">
    <property type="protein sequence ID" value="SIT60436.1"/>
    <property type="molecule type" value="Genomic_DNA"/>
</dbReference>
<dbReference type="EMBL" id="BX284604">
    <property type="protein sequence ID" value="SIT60437.1"/>
    <property type="molecule type" value="Genomic_DNA"/>
</dbReference>
<dbReference type="PIR" id="T43638">
    <property type="entry name" value="T43638"/>
</dbReference>
<dbReference type="RefSeq" id="NP_001023575.1">
    <property type="nucleotide sequence ID" value="NM_001028404.2"/>
</dbReference>
<dbReference type="RefSeq" id="NP_001335546.1">
    <property type="nucleotide sequence ID" value="NM_001348645.1"/>
</dbReference>
<dbReference type="RefSeq" id="NP_001335547.1">
    <property type="nucleotide sequence ID" value="NM_001348644.1"/>
</dbReference>
<dbReference type="RefSeq" id="NP_001368631.1">
    <molecule id="Q9TZP5-1"/>
    <property type="nucleotide sequence ID" value="NM_001380265.1"/>
</dbReference>
<dbReference type="RefSeq" id="NP_001368632.1">
    <molecule id="Q9TZP5-3"/>
    <property type="nucleotide sequence ID" value="NM_001380264.1"/>
</dbReference>
<dbReference type="RefSeq" id="NP_001370851.1">
    <molecule id="Q9TZP5-2"/>
    <property type="nucleotide sequence ID" value="NM_001383103.2"/>
</dbReference>
<dbReference type="SMR" id="Q9TZP5"/>
<dbReference type="FunCoup" id="Q9TZP5">
    <property type="interactions" value="1"/>
</dbReference>
<dbReference type="STRING" id="6239.Y73B6BL.7a.1"/>
<dbReference type="MEROPS" id="C14.014"/>
<dbReference type="PaxDb" id="6239-Y73B6BL.7"/>
<dbReference type="EnsemblMetazoa" id="Y73B6BL.7a.1">
    <molecule id="Q9TZP5-2"/>
    <property type="protein sequence ID" value="Y73B6BL.7a.1"/>
    <property type="gene ID" value="WBGene00000820"/>
</dbReference>
<dbReference type="EnsemblMetazoa" id="Y73B6BL.7b.1">
    <molecule id="Q9TZP5-1"/>
    <property type="protein sequence ID" value="Y73B6BL.7b.1"/>
    <property type="gene ID" value="WBGene00000820"/>
</dbReference>
<dbReference type="EnsemblMetazoa" id="Y73B6BL.7c.1">
    <molecule id="Q9TZP5-3"/>
    <property type="protein sequence ID" value="Y73B6BL.7c.1"/>
    <property type="gene ID" value="WBGene00000820"/>
</dbReference>
<dbReference type="GeneID" id="177391"/>
<dbReference type="UCSC" id="Y73B6BL.7">
    <molecule id="Q9TZP5-1"/>
    <property type="organism name" value="c. elegans"/>
</dbReference>
<dbReference type="AGR" id="WB:WBGene00000820"/>
<dbReference type="WormBase" id="Y73B6BL.7a">
    <molecule id="Q9TZP5-2"/>
    <property type="protein sequence ID" value="CE28270"/>
    <property type="gene ID" value="WBGene00000820"/>
    <property type="gene designation" value="csp-2"/>
</dbReference>
<dbReference type="WormBase" id="Y73B6BL.7b">
    <molecule id="Q9TZP5-1"/>
    <property type="protein sequence ID" value="CE51898"/>
    <property type="gene ID" value="WBGene00000820"/>
    <property type="gene designation" value="csp-2"/>
</dbReference>
<dbReference type="WormBase" id="Y73B6BL.7c">
    <molecule id="Q9TZP5-3"/>
    <property type="protein sequence ID" value="CE51881"/>
    <property type="gene ID" value="WBGene00000820"/>
    <property type="gene designation" value="csp-2"/>
</dbReference>
<dbReference type="eggNOG" id="KOG0516">
    <property type="taxonomic scope" value="Eukaryota"/>
</dbReference>
<dbReference type="eggNOG" id="KOG3573">
    <property type="taxonomic scope" value="Eukaryota"/>
</dbReference>
<dbReference type="GeneTree" id="ENSGT00970000196149"/>
<dbReference type="HOGENOM" id="CLU_342972_0_0_1"/>
<dbReference type="InParanoid" id="Q9TZP5"/>
<dbReference type="OrthoDB" id="6114029at2759"/>
<dbReference type="PRO" id="PR:Q9TZP5"/>
<dbReference type="Proteomes" id="UP000001940">
    <property type="component" value="Chromosome IV"/>
</dbReference>
<dbReference type="Bgee" id="WBGene00000820">
    <property type="expression patterns" value="Expressed in larva and 4 other cell types or tissues"/>
</dbReference>
<dbReference type="GO" id="GO:0005737">
    <property type="term" value="C:cytoplasm"/>
    <property type="evidence" value="ECO:0007669"/>
    <property type="project" value="UniProtKB-SubCell"/>
</dbReference>
<dbReference type="GO" id="GO:0097179">
    <property type="term" value="C:protease inhibitor complex"/>
    <property type="evidence" value="ECO:0000315"/>
    <property type="project" value="UniProtKB"/>
</dbReference>
<dbReference type="GO" id="GO:0089720">
    <property type="term" value="F:caspase binding"/>
    <property type="evidence" value="ECO:0000353"/>
    <property type="project" value="UniProtKB"/>
</dbReference>
<dbReference type="GO" id="GO:0140608">
    <property type="term" value="F:cysteine-type endopeptidase activator activity"/>
    <property type="evidence" value="ECO:0000315"/>
    <property type="project" value="UniProtKB"/>
</dbReference>
<dbReference type="GO" id="GO:0004197">
    <property type="term" value="F:cysteine-type endopeptidase activity"/>
    <property type="evidence" value="ECO:0007669"/>
    <property type="project" value="InterPro"/>
</dbReference>
<dbReference type="GO" id="GO:0043027">
    <property type="term" value="F:cysteine-type endopeptidase inhibitor activity involved in apoptotic process"/>
    <property type="evidence" value="ECO:0000318"/>
    <property type="project" value="GO_Central"/>
</dbReference>
<dbReference type="GO" id="GO:0035375">
    <property type="term" value="F:zymogen binding"/>
    <property type="evidence" value="ECO:0000314"/>
    <property type="project" value="UniProtKB"/>
</dbReference>
<dbReference type="GO" id="GO:0043066">
    <property type="term" value="P:negative regulation of apoptotic process"/>
    <property type="evidence" value="ECO:0000316"/>
    <property type="project" value="UniProtKB"/>
</dbReference>
<dbReference type="GO" id="GO:1904747">
    <property type="term" value="P:positive regulation of apoptotic process involved in development"/>
    <property type="evidence" value="ECO:0000316"/>
    <property type="project" value="UniProtKB"/>
</dbReference>
<dbReference type="GO" id="GO:0006508">
    <property type="term" value="P:proteolysis"/>
    <property type="evidence" value="ECO:0007669"/>
    <property type="project" value="InterPro"/>
</dbReference>
<dbReference type="CDD" id="cd00032">
    <property type="entry name" value="CASc"/>
    <property type="match status" value="1"/>
</dbReference>
<dbReference type="FunFam" id="3.30.70.1470:FF:000007">
    <property type="entry name" value="Non-catalytic caspase homolog csp-3"/>
    <property type="match status" value="1"/>
</dbReference>
<dbReference type="FunFam" id="3.40.50.1460:FF:000046">
    <property type="entry name" value="Putative inactive caspase B"/>
    <property type="match status" value="1"/>
</dbReference>
<dbReference type="Gene3D" id="3.40.50.1460">
    <property type="match status" value="1"/>
</dbReference>
<dbReference type="Gene3D" id="3.30.70.1470">
    <property type="entry name" value="Caspase-like"/>
    <property type="match status" value="1"/>
</dbReference>
<dbReference type="InterPro" id="IPR029030">
    <property type="entry name" value="Caspase-like_dom_sf"/>
</dbReference>
<dbReference type="InterPro" id="IPR052039">
    <property type="entry name" value="Caspase-related_regulators"/>
</dbReference>
<dbReference type="InterPro" id="IPR016129">
    <property type="entry name" value="Caspase_his_AS"/>
</dbReference>
<dbReference type="InterPro" id="IPR011600">
    <property type="entry name" value="Pept_C14_caspase"/>
</dbReference>
<dbReference type="InterPro" id="IPR002138">
    <property type="entry name" value="Pept_C14_p10"/>
</dbReference>
<dbReference type="InterPro" id="IPR001309">
    <property type="entry name" value="Pept_C14_p20"/>
</dbReference>
<dbReference type="InterPro" id="IPR015917">
    <property type="entry name" value="Pept_C14A"/>
</dbReference>
<dbReference type="PANTHER" id="PTHR22576:SF41">
    <property type="entry name" value="CASPASE 14, APOPTOSIS-RELATED CYSTEINE PEPTIDASE"/>
    <property type="match status" value="1"/>
</dbReference>
<dbReference type="PANTHER" id="PTHR22576">
    <property type="entry name" value="MUCOSA ASSOCIATED LYMPHOID TISSUE LYMPHOMA TRANSLOCATION PROTEIN 1/PARACASPASE"/>
    <property type="match status" value="1"/>
</dbReference>
<dbReference type="Pfam" id="PF00656">
    <property type="entry name" value="Peptidase_C14"/>
    <property type="match status" value="1"/>
</dbReference>
<dbReference type="PRINTS" id="PR00376">
    <property type="entry name" value="IL1BCENZYME"/>
</dbReference>
<dbReference type="SMART" id="SM00115">
    <property type="entry name" value="CASc"/>
    <property type="match status" value="1"/>
</dbReference>
<dbReference type="SUPFAM" id="SSF52129">
    <property type="entry name" value="Caspase-like"/>
    <property type="match status" value="1"/>
</dbReference>
<dbReference type="PROSITE" id="PS01121">
    <property type="entry name" value="CASPASE_HIS"/>
    <property type="match status" value="1"/>
</dbReference>
<dbReference type="PROSITE" id="PS50207">
    <property type="entry name" value="CASPASE_P10"/>
    <property type="match status" value="1"/>
</dbReference>
<dbReference type="PROSITE" id="PS50208">
    <property type="entry name" value="CASPASE_P20"/>
    <property type="match status" value="1"/>
</dbReference>
<sequence>MMCEDASDGKKIDETRKYRNNRSSKCRAIIINNVVFCGMEKRIGSDKDKKKLSKLFERLGYQSTSYDNLKSSEILETVRQFTQSNHGDSLIITIMSHGDQGLLYGVDGVPVQMLDIIDLMCTASLAKKPKWLMCVCCRGDRIDRAVRCDGFIDNFFDRFPKFFQFMKSKFPSHQTSSSQADLLVSFSTSPGFLSFRDETKGTWYIQELYRVIIENAKDTHLADLLMETNRRVVEKYEADKVVIVCKQAPEFWSRFTKQLFFDV</sequence>
<feature type="propeptide" id="PRO_0000439221" description="Removed in mature form by cps-1 or ced-3" evidence="5">
    <location>
        <begin position="1"/>
        <end position="8"/>
    </location>
</feature>
<feature type="chain" id="PRO_0000439222" description="Putative inactive caspase B subunit p31" evidence="6">
    <location>
        <begin position="9"/>
        <end position="263"/>
    </location>
</feature>
<feature type="chain" id="PRO_0000439223" description="Putative inactive caspase B subunit p17" evidence="6">
    <location>
        <begin position="9"/>
        <end position="149"/>
    </location>
</feature>
<feature type="chain" id="PRO_0000439224" description="Putative inactive caspase subunit p14" evidence="6">
    <location>
        <begin position="150"/>
        <end position="263"/>
    </location>
</feature>
<feature type="splice variant" id="VSP_058807" description="In isoform a." evidence="7">
    <original>M</original>
    <variation>MKIGWLLITICSGIITKCINAHSSPYQNANESAIDDAYFLVLIIPAVSVAIVLVVVIFLCCPRQQIRSDNVIKLEEGVNDVIEENVTHVVSLREAKVSGMMTDLTRFRQEIFTKHLTFNSNPESIDAATKNVQNVKQSLDTWRDRIKERLDEIDRLCTEEGDSLTPEQYSALREMRRQLADEYDTVLRTVEGIHTRLNILSALLIEFSSVTSSMQSWMTDRARLAGDIRHKSGDPMRVDEARFEAKSLMDEVVREESRLKTIGASVLKIEQEISAMRDDVRASRSTDDVGISMDEVYEKRRRVEVDYMQLLRQCQDLISLQIRLHAMNDEHAEQARRAEGWLQMLKNDVAGVAKDPRFKKDEDLIERDEELNRMAAGGSGGPTSRQLAMREKIEQREREEEEWRRKAKEKFEEEAAKNRARERKWAEEHGFNRPIRTRSQKYAEQDRIRYARKKAALEQSNEQSNESTDDAVESDSDDVPAPQSPPTPSPADPGPTTSSSSLTQDPASNATGFSDVPAPQAPPTPSPADPGPTTSSSSLTQDPASNATGFSGSSPPNSFEETRM</variation>
    <location>
        <position position="1"/>
    </location>
</feature>
<feature type="splice variant" id="VSP_059611" description="In isoform c." evidence="7">
    <original>M</original>
    <variation>MMTDLTRFRQEIFTKHLTFNSNPESIDAATKNVQNVKQSLDTWRDRIKERLDEIDRLCTEEGDSLTPEQYSALREMRRQLADEYDTVLRTVEGIHTRLNILSALLIEFSSVTSSMQSWMTDRARLAGDIRHKSGDPMRVDEARFEAKSLMDEVVREESRLKTIGASVLKIEQEISAMRDDVRASRSTDDVGISMDEVYEKRRRVEVDYMQLLRQCQDLISLQIRLHAMNDEHAEQARRAEGWLQMLKNDVAGVAKDPRFKKDEDLIERDEELNRMAAGGSGGPTSRQLAMREKIEQREREEEEWRRKAKEKFEEEAAKNRARERKWAEEHGFNRPIRTRSQKYAEQDRIRYARKKAALEQSNEQSNESTDDAVESDSDDVPAPQSPPTPSPADPGPTTSSSSLTQDPASNATGFSDVPAPQAPPTPSPADPGPTTSSSSLTQDPASNATGFSGSSPPNSFEETRM</variation>
    <location>
        <position position="1"/>
    </location>
</feature>
<feature type="mutagenesis site" description="Loss of propeptide cleavage." evidence="5">
    <original>D</original>
    <variation>A</variation>
    <location>
        <position position="8"/>
    </location>
</feature>
<feature type="mutagenesis site" description="Loss of interaction with ced-3 small subunit p13. Increased germline apoptosis in a ced-6 n2095 mutant background, loss of interaction with ced-3 and loss of ced-3 autoactivation; when associated with D-186." evidence="3">
    <original>WL</original>
    <variation>ER</variation>
    <location>
        <begin position="131"/>
        <end position="132"/>
    </location>
</feature>
<feature type="mutagenesis site" description="Reduction in the interaction with ced-3 small subunit p13." evidence="3">
    <original>C</original>
    <variation>E</variation>
    <location>
        <position position="134"/>
    </location>
</feature>
<feature type="mutagenesis site" description="Severe reduction in the interaction with ced-3 large subunit p17. Increased germline apoptosis in a ced-6 n2095 mutant background, loss of interaction with ced-3 and loss of ced-3 autoactivation; when associated with E-131 and R-132." evidence="3">
    <original>F</original>
    <variation>D</variation>
    <location>
        <position position="186"/>
    </location>
</feature>
<keyword id="KW-0025">Alternative splicing</keyword>
<keyword id="KW-0963">Cytoplasm</keyword>
<keyword id="KW-1185">Reference proteome</keyword>
<proteinExistence type="evidence at protein level"/>
<name>CSP2_CAEEL</name>
<reference evidence="9" key="1">
    <citation type="journal article" date="1998" name="J. Biol. Chem.">
        <title>Identification of multiple Caenorhabditis elegans caspases and their potential roles in proteolytic cascades.</title>
        <authorList>
            <person name="Shaham S."/>
        </authorList>
    </citation>
    <scope>NUCLEOTIDE SEQUENCE [MRNA] (ISOFORMS A AND B)</scope>
    <scope>FUNCTION</scope>
    <scope>LACK OF CATALYTIC ACTIVITY</scope>
    <scope>PROTEOLYTIC CLEAVAGE</scope>
    <scope>MUTAGENESIS OF ASP-8</scope>
    <source>
        <strain evidence="9">Bristol N2</strain>
    </source>
</reference>
<reference evidence="10" key="2">
    <citation type="journal article" date="1998" name="Science">
        <title>Genome sequence of the nematode C. elegans: a platform for investigating biology.</title>
        <authorList>
            <consortium name="The C. elegans sequencing consortium"/>
        </authorList>
    </citation>
    <scope>NUCLEOTIDE SEQUENCE [LARGE SCALE GENOMIC DNA]</scope>
    <source>
        <strain evidence="10">Bristol N2</strain>
    </source>
</reference>
<reference evidence="7" key="3">
    <citation type="journal article" date="2009" name="Cell Death Differ.">
        <title>Caenorhabditis elegans caspase homolog CSP-2 inhibits CED-3 autoactivation and apoptosis in germ cells.</title>
        <authorList>
            <person name="Geng X."/>
            <person name="Zhou Q.H."/>
            <person name="Kage-Nakadai E."/>
            <person name="Shi Y."/>
            <person name="Yan N."/>
            <person name="Mitani S."/>
            <person name="Xue D."/>
        </authorList>
    </citation>
    <scope>FUNCTION (ISOFORMS A AND B)</scope>
    <scope>INTERACTION WITH CED-3</scope>
    <scope>SUBCELLULAR LOCATION</scope>
    <scope>TISSUE SPECIFICITY</scope>
    <scope>MUTAGENESIS OF 131-TRP--LEU-132; CYS-134 AND PHE-186</scope>
</reference>
<reference evidence="7" key="4">
    <citation type="journal article" date="2013" name="PLoS Genet.">
        <title>Both the caspase CSP-1 and a caspase-independent pathway promote programmed cell death in parallel to the canonical pathway for apoptosis in Caenorhabditis elegans.</title>
        <authorList>
            <person name="Denning D.P."/>
            <person name="Hatch V."/>
            <person name="Horvitz H.R."/>
        </authorList>
    </citation>
    <scope>DISRUPTION PHENOTYPE</scope>
</reference>
<comment type="function">
    <molecule>Isoform b</molecule>
    <text evidence="3 5">Putative inactive caspase (PubMed:9857046). In the germline, binds caspase ced-3 zymogen and prevents ced-3 autoactivation. Does not affect the caspase activity of mature ced-3 and ced-4-mediated mature ced-3 activation (PubMed:19575016). Negatively regulates germline apoptosis by inhibiting autocleavage of caspase ced-3 (PubMed:19575016). Involved in fertility (PubMed:19575016).</text>
</comment>
<comment type="function">
    <molecule>Isoform a</molecule>
    <text evidence="3 6">Putative inactive caspase (PubMed:9857046). Dispensable for the inhibition of germline apoptosis (PubMed:19575016).</text>
</comment>
<comment type="subunit">
    <text evidence="3">Interacts with ced-3 (via large subunit p17 or small subunit p13); the interaction inhibits ced-3 autoactivation.</text>
</comment>
<comment type="subcellular location">
    <molecule>Isoform b</molecule>
    <subcellularLocation>
        <location evidence="3">Cytoplasm</location>
    </subcellularLocation>
</comment>
<comment type="alternative products">
    <event type="alternative splicing"/>
    <isoform>
        <id>Q9TZP5-1</id>
        <name evidence="12">b</name>
        <sequence type="displayed"/>
    </isoform>
    <isoform>
        <id>Q9TZP5-2</id>
        <name evidence="11">a</name>
        <sequence type="described" ref="VSP_058807"/>
    </isoform>
    <isoform>
        <id>Q9TZP5-3</id>
        <name evidence="13">c</name>
        <sequence type="described" ref="VSP_059611"/>
    </isoform>
</comment>
<comment type="tissue specificity">
    <text evidence="3">Specifically expressed in the hermaphrodite germline.</text>
</comment>
<comment type="PTM">
    <text evidence="5">Cleavage by csp-1 isoform b or ced-3 removes the propeptide and generates subunit p31 in vitro. An additional cleavage at Asp-149 generates the 2 subunits p17 and p14 but this cleavage appears to be less efficient.</text>
</comment>
<comment type="disruption phenotype">
    <text evidence="4">Survival of touch neurons and several pharyngeal cells is not affected during development. In a ced-3 n2427 or ced-3 n2427 and cps-3 n4872 mutant background, no extra pharyngeal cells caused by impaired apoptosis are produced. In a csp-3 n4872, csp-1 n4967 and ced-3 n3692 mutant background, pharyngeal cells, that are normally fated to die, survive and 16 percent of animals have still 1 or more cell corpses that are morphologically apoptotic and are internalized by engulfing cells. In addition, apoptosis of the male linker cell occurs normally.</text>
</comment>
<comment type="similarity">
    <text evidence="1 2">Belongs to the peptidase C14A family.</text>
</comment>
<comment type="caution">
    <text evidence="6">Although the active site residues Cys and His are conserved, appears to lack catalytic activity in vitro. This is probably due to the active site pentapeptide VCCRG being highly divergent from the canonical active site pentapeptide QAC[RQG]G present in catalytically active caspases.</text>
</comment>
<gene>
    <name evidence="6 12" type="primary">csp-2</name>
    <name evidence="12" type="ORF">Y73B6BL.7</name>
</gene>
<accession>Q9TZP5</accession>
<accession>A0A1N7SZF9</accession>
<accession>G5ECY5</accession>